<accession>Q85Y15</accession>
<gene>
    <name type="primary">ndhI</name>
</gene>
<geneLocation type="chloroplast"/>
<sequence length="163" mass="19157">MFSMVTGFMNYSQQTIRAARYIGQSFVITLSHTNRLPITIQYPYEKSITSERFRGRIHFEFDKCIACEVCVRVCPIDLPVVDWRFERDIKKKQLLNYSIDFGVCIFCGNCVEYCPTNCLSMTEEYELSTSDRHEDYTIQTVMNSTQIKIDKDKPFDSRTITNY</sequence>
<organism>
    <name type="scientific">Phoenix dactylifera</name>
    <name type="common">Date palm</name>
    <dbReference type="NCBI Taxonomy" id="42345"/>
    <lineage>
        <taxon>Eukaryota</taxon>
        <taxon>Viridiplantae</taxon>
        <taxon>Streptophyta</taxon>
        <taxon>Embryophyta</taxon>
        <taxon>Tracheophyta</taxon>
        <taxon>Spermatophyta</taxon>
        <taxon>Magnoliopsida</taxon>
        <taxon>Liliopsida</taxon>
        <taxon>Arecaceae</taxon>
        <taxon>Coryphoideae</taxon>
        <taxon>Phoeniceae</taxon>
        <taxon>Phoenix</taxon>
    </lineage>
</organism>
<dbReference type="EC" id="7.1.1.-"/>
<dbReference type="EMBL" id="AY166803">
    <property type="protein sequence ID" value="AAO27803.1"/>
    <property type="molecule type" value="Genomic_DNA"/>
</dbReference>
<dbReference type="SMR" id="Q85Y15"/>
<dbReference type="Proteomes" id="UP000228380">
    <property type="component" value="Unplaced"/>
</dbReference>
<dbReference type="GO" id="GO:0009535">
    <property type="term" value="C:chloroplast thylakoid membrane"/>
    <property type="evidence" value="ECO:0007669"/>
    <property type="project" value="UniProtKB-SubCell"/>
</dbReference>
<dbReference type="GO" id="GO:0051539">
    <property type="term" value="F:4 iron, 4 sulfur cluster binding"/>
    <property type="evidence" value="ECO:0007669"/>
    <property type="project" value="UniProtKB-KW"/>
</dbReference>
<dbReference type="GO" id="GO:0046872">
    <property type="term" value="F:metal ion binding"/>
    <property type="evidence" value="ECO:0007669"/>
    <property type="project" value="UniProtKB-KW"/>
</dbReference>
<dbReference type="GO" id="GO:0008137">
    <property type="term" value="F:NADH dehydrogenase (ubiquinone) activity"/>
    <property type="evidence" value="ECO:0007669"/>
    <property type="project" value="InterPro"/>
</dbReference>
<dbReference type="GO" id="GO:0048038">
    <property type="term" value="F:quinone binding"/>
    <property type="evidence" value="ECO:0007669"/>
    <property type="project" value="UniProtKB-KW"/>
</dbReference>
<dbReference type="Gene3D" id="3.30.70.3270">
    <property type="match status" value="1"/>
</dbReference>
<dbReference type="InterPro" id="IPR017896">
    <property type="entry name" value="4Fe4S_Fe-S-bd"/>
</dbReference>
<dbReference type="InterPro" id="IPR017900">
    <property type="entry name" value="4Fe4S_Fe_S_CS"/>
</dbReference>
<dbReference type="InterPro" id="IPR010226">
    <property type="entry name" value="NADH_quinone_OxRdtase_chainI"/>
</dbReference>
<dbReference type="InterPro" id="IPR004497">
    <property type="entry name" value="NDHI"/>
</dbReference>
<dbReference type="NCBIfam" id="TIGR01971">
    <property type="entry name" value="NuoI"/>
    <property type="match status" value="1"/>
</dbReference>
<dbReference type="NCBIfam" id="NF004537">
    <property type="entry name" value="PRK05888.1-3"/>
    <property type="match status" value="1"/>
</dbReference>
<dbReference type="PANTHER" id="PTHR47275">
    <property type="entry name" value="NAD(P)H-QUINONE OXIDOREDUCTASE SUBUNIT I, CHLOROPLASTIC"/>
    <property type="match status" value="1"/>
</dbReference>
<dbReference type="PANTHER" id="PTHR47275:SF3">
    <property type="entry name" value="NAD(P)H-QUINONE OXIDOREDUCTASE SUBUNIT I, CHLOROPLASTIC"/>
    <property type="match status" value="1"/>
</dbReference>
<dbReference type="Pfam" id="PF12838">
    <property type="entry name" value="Fer4_7"/>
    <property type="match status" value="1"/>
</dbReference>
<dbReference type="SUPFAM" id="SSF54862">
    <property type="entry name" value="4Fe-4S ferredoxins"/>
    <property type="match status" value="1"/>
</dbReference>
<dbReference type="PROSITE" id="PS00198">
    <property type="entry name" value="4FE4S_FER_1"/>
    <property type="match status" value="2"/>
</dbReference>
<dbReference type="PROSITE" id="PS51379">
    <property type="entry name" value="4FE4S_FER_2"/>
    <property type="match status" value="2"/>
</dbReference>
<keyword id="KW-0004">4Fe-4S</keyword>
<keyword id="KW-0150">Chloroplast</keyword>
<keyword id="KW-0408">Iron</keyword>
<keyword id="KW-0411">Iron-sulfur</keyword>
<keyword id="KW-0472">Membrane</keyword>
<keyword id="KW-0479">Metal-binding</keyword>
<keyword id="KW-0520">NAD</keyword>
<keyword id="KW-0521">NADP</keyword>
<keyword id="KW-0934">Plastid</keyword>
<keyword id="KW-0618">Plastoquinone</keyword>
<keyword id="KW-0874">Quinone</keyword>
<keyword id="KW-1185">Reference proteome</keyword>
<keyword id="KW-0677">Repeat</keyword>
<keyword id="KW-0793">Thylakoid</keyword>
<keyword id="KW-1278">Translocase</keyword>
<feature type="chain" id="PRO_0000245670" description="NAD(P)H-quinone oxidoreductase subunit I, chloroplastic">
    <location>
        <begin position="1"/>
        <end position="163"/>
    </location>
</feature>
<feature type="domain" description="4Fe-4S ferredoxin-type 1" evidence="2">
    <location>
        <begin position="55"/>
        <end position="84"/>
    </location>
</feature>
<feature type="domain" description="4Fe-4S ferredoxin-type 2" evidence="2">
    <location>
        <begin position="95"/>
        <end position="124"/>
    </location>
</feature>
<feature type="binding site" evidence="1">
    <location>
        <position position="64"/>
    </location>
    <ligand>
        <name>[4Fe-4S] cluster</name>
        <dbReference type="ChEBI" id="CHEBI:49883"/>
        <label>1</label>
    </ligand>
</feature>
<feature type="binding site" evidence="1">
    <location>
        <position position="67"/>
    </location>
    <ligand>
        <name>[4Fe-4S] cluster</name>
        <dbReference type="ChEBI" id="CHEBI:49883"/>
        <label>1</label>
    </ligand>
</feature>
<feature type="binding site" evidence="1">
    <location>
        <position position="70"/>
    </location>
    <ligand>
        <name>[4Fe-4S] cluster</name>
        <dbReference type="ChEBI" id="CHEBI:49883"/>
        <label>1</label>
    </ligand>
</feature>
<feature type="binding site" evidence="1">
    <location>
        <position position="74"/>
    </location>
    <ligand>
        <name>[4Fe-4S] cluster</name>
        <dbReference type="ChEBI" id="CHEBI:49883"/>
        <label>2</label>
    </ligand>
</feature>
<feature type="binding site" evidence="1">
    <location>
        <position position="104"/>
    </location>
    <ligand>
        <name>[4Fe-4S] cluster</name>
        <dbReference type="ChEBI" id="CHEBI:49883"/>
        <label>2</label>
    </ligand>
</feature>
<feature type="binding site" evidence="1">
    <location>
        <position position="107"/>
    </location>
    <ligand>
        <name>[4Fe-4S] cluster</name>
        <dbReference type="ChEBI" id="CHEBI:49883"/>
        <label>2</label>
    </ligand>
</feature>
<feature type="binding site" evidence="1">
    <location>
        <position position="110"/>
    </location>
    <ligand>
        <name>[4Fe-4S] cluster</name>
        <dbReference type="ChEBI" id="CHEBI:49883"/>
        <label>2</label>
    </ligand>
</feature>
<feature type="binding site" evidence="1">
    <location>
        <position position="114"/>
    </location>
    <ligand>
        <name>[4Fe-4S] cluster</name>
        <dbReference type="ChEBI" id="CHEBI:49883"/>
        <label>1</label>
    </ligand>
</feature>
<proteinExistence type="inferred from homology"/>
<comment type="function">
    <text evidence="1">NDH shuttles electrons from NAD(P)H:plastoquinone, via FMN and iron-sulfur (Fe-S) centers, to quinones in the photosynthetic chain and possibly in a chloroplast respiratory chain. The immediate electron acceptor for the enzyme in this species is believed to be plastoquinone. Couples the redox reaction to proton translocation, and thus conserves the redox energy in a proton gradient (By similarity).</text>
</comment>
<comment type="catalytic activity">
    <reaction>
        <text>a plastoquinone + NADH + (n+1) H(+)(in) = a plastoquinol + NAD(+) + n H(+)(out)</text>
        <dbReference type="Rhea" id="RHEA:42608"/>
        <dbReference type="Rhea" id="RHEA-COMP:9561"/>
        <dbReference type="Rhea" id="RHEA-COMP:9562"/>
        <dbReference type="ChEBI" id="CHEBI:15378"/>
        <dbReference type="ChEBI" id="CHEBI:17757"/>
        <dbReference type="ChEBI" id="CHEBI:57540"/>
        <dbReference type="ChEBI" id="CHEBI:57945"/>
        <dbReference type="ChEBI" id="CHEBI:62192"/>
    </reaction>
</comment>
<comment type="catalytic activity">
    <reaction>
        <text>a plastoquinone + NADPH + (n+1) H(+)(in) = a plastoquinol + NADP(+) + n H(+)(out)</text>
        <dbReference type="Rhea" id="RHEA:42612"/>
        <dbReference type="Rhea" id="RHEA-COMP:9561"/>
        <dbReference type="Rhea" id="RHEA-COMP:9562"/>
        <dbReference type="ChEBI" id="CHEBI:15378"/>
        <dbReference type="ChEBI" id="CHEBI:17757"/>
        <dbReference type="ChEBI" id="CHEBI:57783"/>
        <dbReference type="ChEBI" id="CHEBI:58349"/>
        <dbReference type="ChEBI" id="CHEBI:62192"/>
    </reaction>
</comment>
<comment type="cofactor">
    <cofactor evidence="1">
        <name>[4Fe-4S] cluster</name>
        <dbReference type="ChEBI" id="CHEBI:49883"/>
    </cofactor>
    <text evidence="1">Binds 2 [4Fe-4S] clusters per subunit.</text>
</comment>
<comment type="subunit">
    <text evidence="1">NDH is composed of at least 16 different subunits, 5 of which are encoded in the nucleus.</text>
</comment>
<comment type="subcellular location">
    <subcellularLocation>
        <location evidence="1">Plastid</location>
        <location evidence="1">Chloroplast thylakoid membrane</location>
        <topology evidence="1">Peripheral membrane protein</topology>
    </subcellularLocation>
</comment>
<comment type="similarity">
    <text evidence="3">Belongs to the complex I 23 kDa subunit family.</text>
</comment>
<name>NDHI_PHODC</name>
<protein>
    <recommendedName>
        <fullName>NAD(P)H-quinone oxidoreductase subunit I, chloroplastic</fullName>
        <ecNumber>7.1.1.-</ecNumber>
    </recommendedName>
    <alternativeName>
        <fullName>NAD(P)H dehydrogenase subunit I</fullName>
        <shortName>NDH subunit I</shortName>
    </alternativeName>
    <alternativeName>
        <fullName>NADH-plastoquinone oxidoreductase subunit I</fullName>
    </alternativeName>
</protein>
<evidence type="ECO:0000250" key="1"/>
<evidence type="ECO:0000255" key="2">
    <source>
        <dbReference type="PROSITE-ProRule" id="PRU00711"/>
    </source>
</evidence>
<evidence type="ECO:0000305" key="3"/>
<reference key="1">
    <citation type="submission" date="2002-10" db="EMBL/GenBank/DDBJ databases">
        <title>Partial sequencing of the chloroplast and mitochondrial chromosomes of Phoenix dactylifera.</title>
        <authorList>
            <person name="Perez-Perez J.M."/>
            <person name="Coy S."/>
            <person name="Villacorta C."/>
            <person name="Micol J.L."/>
        </authorList>
    </citation>
    <scope>NUCLEOTIDE SEQUENCE [LARGE SCALE GENOMIC DNA]</scope>
</reference>